<accession>Q8T6B3</accession>
<organism>
    <name type="scientific">Tetrahymena thermophila</name>
    <dbReference type="NCBI Taxonomy" id="5911"/>
    <lineage>
        <taxon>Eukaryota</taxon>
        <taxon>Sar</taxon>
        <taxon>Alveolata</taxon>
        <taxon>Ciliophora</taxon>
        <taxon>Intramacronucleata</taxon>
        <taxon>Oligohymenophorea</taxon>
        <taxon>Hymenostomatida</taxon>
        <taxon>Tetrahymenina</taxon>
        <taxon>Tetrahymenidae</taxon>
        <taxon>Tetrahymena</taxon>
    </lineage>
</organism>
<protein>
    <recommendedName>
        <fullName>Metallothionein-1</fullName>
        <shortName>MT-1</shortName>
    </recommendedName>
</protein>
<proteinExistence type="inferred from homology"/>
<sequence length="107" mass="11179">MDKVNNNCCCGENAKPCCTDPNSGCCCVSETNNCCKSDKKECCTGTGEGCKWTGCKCCQPAKSGCCCGDKAKACCTDPNSGCCCSSKTNKCCDSTNKTECKTCECCK</sequence>
<feature type="chain" id="PRO_0000197360" description="Metallothionein-1">
    <location>
        <begin position="1"/>
        <end position="107"/>
    </location>
</feature>
<keyword id="KW-0104">Cadmium</keyword>
<keyword id="KW-0479">Metal-binding</keyword>
<keyword id="KW-0480">Metal-thiolate cluster</keyword>
<name>MT1_TETTH</name>
<reference key="1">
    <citation type="submission" date="2002-02" db="EMBL/GenBank/DDBJ databases">
        <authorList>
            <person name="Piccinni E."/>
            <person name="Boldrin F."/>
            <person name="Santovito G."/>
            <person name="Irato P."/>
        </authorList>
    </citation>
    <scope>NUCLEOTIDE SEQUENCE [GENOMIC DNA]</scope>
</reference>
<evidence type="ECO:0000250" key="1"/>
<evidence type="ECO:0000305" key="2"/>
<comment type="function">
    <text evidence="1">The metallothioneins are involved in the cellular sequestration of toxic metal ions. Binds 12 cadmium ions per molecule (By similarity).</text>
</comment>
<comment type="similarity">
    <text evidence="2">Belongs to the metallothionein superfamily. Type 7 family.</text>
</comment>
<dbReference type="EMBL" id="AF479587">
    <property type="protein sequence ID" value="AAL87688.1"/>
    <property type="molecule type" value="Genomic_DNA"/>
</dbReference>
<dbReference type="GO" id="GO:0046870">
    <property type="term" value="F:cadmium ion binding"/>
    <property type="evidence" value="ECO:0007669"/>
    <property type="project" value="InterPro"/>
</dbReference>
<dbReference type="InterPro" id="IPR012484">
    <property type="entry name" value="Metalthion_7"/>
</dbReference>
<dbReference type="Pfam" id="PF07846">
    <property type="entry name" value="Metallothio_Cad"/>
    <property type="match status" value="2"/>
</dbReference>